<gene>
    <name type="primary">Mpzl1</name>
</gene>
<dbReference type="EMBL" id="BC078916">
    <property type="protein sequence ID" value="AAH78916.1"/>
    <property type="molecule type" value="mRNA"/>
</dbReference>
<dbReference type="RefSeq" id="NP_001007729.1">
    <property type="nucleotide sequence ID" value="NM_001007728.2"/>
</dbReference>
<dbReference type="SMR" id="Q6AYT8"/>
<dbReference type="FunCoup" id="Q6AYT8">
    <property type="interactions" value="1517"/>
</dbReference>
<dbReference type="STRING" id="10116.ENSRNOP00000004376"/>
<dbReference type="GlyCosmos" id="Q6AYT8">
    <property type="glycosylation" value="2 sites, No reported glycans"/>
</dbReference>
<dbReference type="GlyGen" id="Q6AYT8">
    <property type="glycosylation" value="2 sites"/>
</dbReference>
<dbReference type="iPTMnet" id="Q6AYT8"/>
<dbReference type="PhosphoSitePlus" id="Q6AYT8"/>
<dbReference type="PaxDb" id="10116-ENSRNOP00000004376"/>
<dbReference type="Ensembl" id="ENSRNOT00000004376.6">
    <property type="protein sequence ID" value="ENSRNOP00000004376.4"/>
    <property type="gene ID" value="ENSRNOG00000003248.7"/>
</dbReference>
<dbReference type="GeneID" id="360871"/>
<dbReference type="KEGG" id="rno:360871"/>
<dbReference type="UCSC" id="RGD:1359140">
    <property type="organism name" value="rat"/>
</dbReference>
<dbReference type="AGR" id="RGD:1359140"/>
<dbReference type="CTD" id="9019"/>
<dbReference type="RGD" id="1359140">
    <property type="gene designation" value="Mpzl1"/>
</dbReference>
<dbReference type="eggNOG" id="ENOG502QUEQ">
    <property type="taxonomic scope" value="Eukaryota"/>
</dbReference>
<dbReference type="GeneTree" id="ENSGT01030000234556"/>
<dbReference type="HOGENOM" id="CLU_090350_3_0_1"/>
<dbReference type="InParanoid" id="Q6AYT8"/>
<dbReference type="OMA" id="RDYTGCN"/>
<dbReference type="OrthoDB" id="8831214at2759"/>
<dbReference type="PhylomeDB" id="Q6AYT8"/>
<dbReference type="TreeFam" id="TF331728"/>
<dbReference type="PRO" id="PR:Q6AYT8"/>
<dbReference type="Proteomes" id="UP000002494">
    <property type="component" value="Chromosome 13"/>
</dbReference>
<dbReference type="Bgee" id="ENSRNOG00000003248">
    <property type="expression patterns" value="Expressed in lung and 20 other cell types or tissues"/>
</dbReference>
<dbReference type="GO" id="GO:0005886">
    <property type="term" value="C:plasma membrane"/>
    <property type="evidence" value="ECO:0000318"/>
    <property type="project" value="GO_Central"/>
</dbReference>
<dbReference type="FunFam" id="2.60.40.10:FF:000193">
    <property type="entry name" value="Myelin protein zero-like 1 like"/>
    <property type="match status" value="1"/>
</dbReference>
<dbReference type="Gene3D" id="2.60.40.10">
    <property type="entry name" value="Immunoglobulins"/>
    <property type="match status" value="1"/>
</dbReference>
<dbReference type="InterPro" id="IPR007110">
    <property type="entry name" value="Ig-like_dom"/>
</dbReference>
<dbReference type="InterPro" id="IPR036179">
    <property type="entry name" value="Ig-like_dom_sf"/>
</dbReference>
<dbReference type="InterPro" id="IPR013783">
    <property type="entry name" value="Ig-like_fold"/>
</dbReference>
<dbReference type="InterPro" id="IPR003599">
    <property type="entry name" value="Ig_sub"/>
</dbReference>
<dbReference type="InterPro" id="IPR013106">
    <property type="entry name" value="Ig_V-set"/>
</dbReference>
<dbReference type="InterPro" id="IPR000920">
    <property type="entry name" value="Myelin_P0-rel"/>
</dbReference>
<dbReference type="PANTHER" id="PTHR13869">
    <property type="entry name" value="MYELIN P0 RELATED"/>
    <property type="match status" value="1"/>
</dbReference>
<dbReference type="PANTHER" id="PTHR13869:SF19">
    <property type="entry name" value="MYELIN PROTEIN ZERO-LIKE PROTEIN 1"/>
    <property type="match status" value="1"/>
</dbReference>
<dbReference type="Pfam" id="PF07686">
    <property type="entry name" value="V-set"/>
    <property type="match status" value="1"/>
</dbReference>
<dbReference type="PRINTS" id="PR00213">
    <property type="entry name" value="MYELINP0"/>
</dbReference>
<dbReference type="SMART" id="SM00409">
    <property type="entry name" value="IG"/>
    <property type="match status" value="1"/>
</dbReference>
<dbReference type="SMART" id="SM00406">
    <property type="entry name" value="IGv"/>
    <property type="match status" value="1"/>
</dbReference>
<dbReference type="SUPFAM" id="SSF48726">
    <property type="entry name" value="Immunoglobulin"/>
    <property type="match status" value="1"/>
</dbReference>
<dbReference type="PROSITE" id="PS50835">
    <property type="entry name" value="IG_LIKE"/>
    <property type="match status" value="1"/>
</dbReference>
<feature type="signal peptide" evidence="3">
    <location>
        <begin position="1"/>
        <end position="35"/>
    </location>
</feature>
<feature type="chain" id="PRO_0000240337" description="Myelin protein zero-like protein 1">
    <location>
        <begin position="36"/>
        <end position="270"/>
    </location>
</feature>
<feature type="topological domain" description="Extracellular" evidence="3">
    <location>
        <begin position="36"/>
        <end position="162"/>
    </location>
</feature>
<feature type="transmembrane region" description="Helical" evidence="3">
    <location>
        <begin position="163"/>
        <end position="183"/>
    </location>
</feature>
<feature type="topological domain" description="Cytoplasmic" evidence="3">
    <location>
        <begin position="184"/>
        <end position="270"/>
    </location>
</feature>
<feature type="domain" description="Ig-like V-type">
    <location>
        <begin position="36"/>
        <end position="151"/>
    </location>
</feature>
<feature type="region of interest" description="Disordered" evidence="5">
    <location>
        <begin position="201"/>
        <end position="257"/>
    </location>
</feature>
<feature type="short sequence motif" description="ITIM motif 1">
    <location>
        <begin position="240"/>
        <end position="245"/>
    </location>
</feature>
<feature type="short sequence motif" description="ITIM motif 2">
    <location>
        <begin position="262"/>
        <end position="267"/>
    </location>
</feature>
<feature type="modified residue" description="Phosphoserine" evidence="2">
    <location>
        <position position="204"/>
    </location>
</feature>
<feature type="modified residue" description="Phosphoserine" evidence="2">
    <location>
        <position position="206"/>
    </location>
</feature>
<feature type="modified residue" description="Phosphoserine" evidence="2">
    <location>
        <position position="210"/>
    </location>
</feature>
<feature type="modified residue" description="Phosphoserine" evidence="2">
    <location>
        <position position="221"/>
    </location>
</feature>
<feature type="modified residue" description="Phosphotyrosine" evidence="2">
    <location>
        <position position="242"/>
    </location>
</feature>
<feature type="modified residue" description="Phosphoserine" evidence="2">
    <location>
        <position position="261"/>
    </location>
</feature>
<feature type="modified residue" description="Phosphotyrosine" evidence="2">
    <location>
        <position position="264"/>
    </location>
</feature>
<feature type="glycosylation site" description="N-linked (GlcNAc...) asparagine" evidence="3">
    <location>
        <position position="50"/>
    </location>
</feature>
<feature type="glycosylation site" description="N-linked (GlcNAc...) asparagine" evidence="3">
    <location>
        <position position="130"/>
    </location>
</feature>
<feature type="disulfide bond" evidence="4">
    <location>
        <begin position="58"/>
        <end position="135"/>
    </location>
</feature>
<evidence type="ECO:0000250" key="1"/>
<evidence type="ECO:0000250" key="2">
    <source>
        <dbReference type="UniProtKB" id="O95297"/>
    </source>
</evidence>
<evidence type="ECO:0000255" key="3"/>
<evidence type="ECO:0000255" key="4">
    <source>
        <dbReference type="PROSITE-ProRule" id="PRU00114"/>
    </source>
</evidence>
<evidence type="ECO:0000256" key="5">
    <source>
        <dbReference type="SAM" id="MobiDB-lite"/>
    </source>
</evidence>
<evidence type="ECO:0000305" key="6"/>
<protein>
    <recommendedName>
        <fullName>Myelin protein zero-like protein 1</fullName>
    </recommendedName>
</protein>
<reference key="1">
    <citation type="journal article" date="2004" name="Genome Res.">
        <title>The status, quality, and expansion of the NIH full-length cDNA project: the Mammalian Gene Collection (MGC).</title>
        <authorList>
            <consortium name="The MGC Project Team"/>
        </authorList>
    </citation>
    <scope>NUCLEOTIDE SEQUENCE [LARGE SCALE MRNA]</scope>
    <source>
        <tissue>Lung</tissue>
    </source>
</reference>
<organism>
    <name type="scientific">Rattus norvegicus</name>
    <name type="common">Rat</name>
    <dbReference type="NCBI Taxonomy" id="10116"/>
    <lineage>
        <taxon>Eukaryota</taxon>
        <taxon>Metazoa</taxon>
        <taxon>Chordata</taxon>
        <taxon>Craniata</taxon>
        <taxon>Vertebrata</taxon>
        <taxon>Euteleostomi</taxon>
        <taxon>Mammalia</taxon>
        <taxon>Eutheria</taxon>
        <taxon>Euarchontoglires</taxon>
        <taxon>Glires</taxon>
        <taxon>Rodentia</taxon>
        <taxon>Myomorpha</taxon>
        <taxon>Muroidea</taxon>
        <taxon>Muridae</taxon>
        <taxon>Murinae</taxon>
        <taxon>Rattus</taxon>
    </lineage>
</organism>
<comment type="function">
    <text evidence="1">Cell surface receptor, which is involved in signal transduction processes. Recruits PTPN11/SHP-2 to the cell membrane and is a putative substrate of PTPN11/SHP-2. Is a major receptor for concanavalin-A (ConA) and is involved in cellular signaling induced by ConA, which probably includes Src family tyrosine-protein kinases. May be involved in regulation of integrin-mediated cell motility (By similarity).</text>
</comment>
<comment type="subunit">
    <text evidence="1">Interacts with phosphorylated PTPN11/SHP-2.</text>
</comment>
<comment type="subcellular location">
    <subcellularLocation>
        <location evidence="6">Membrane</location>
        <topology evidence="6">Single-pass type I membrane protein</topology>
    </subcellularLocation>
</comment>
<comment type="domain">
    <text>Contains 2 copies of a cytoplasmic motif that is referred to as the immunoreceptor tyrosine-based inhibitor motif (ITIM). This motif is involved in modulation of cellular responses. The phosphorylated ITIM motif can bind the SH2 domain of several SH2-containing phosphatases.</text>
</comment>
<comment type="PTM">
    <text evidence="1">Phosphorylated on tyrosine residues upon stimulation with pervanadate and concanavalin-A (ConA). Phosphorylation at Tyr-242 and Tyr-264 is required for interaction with PTPN11/SHP-2. Dephosphorylated by PTPN11/SHP-2 (in vitro) (By similarity).</text>
</comment>
<comment type="PTM">
    <text evidence="1">N-glycosylated.</text>
</comment>
<comment type="similarity">
    <text evidence="6">Belongs to the myelin P0 protein family.</text>
</comment>
<proteinExistence type="evidence at transcript level"/>
<name>MPZL1_RAT</name>
<accession>Q6AYT8</accession>
<sequence>MAEAVGAVTLIAAPARRRWLWSALAAMLGLLTARISALEVHTPKEIFVVNGTQGKLTCTFDSPNTTGWLTTVSWSFQPEGTDSAVSFFHYSQGQVYIGDYPPFKDRVTWAGDLDKKDASINIENIQAVHNGTYICDVKNPPDIVVRPGQIRLHVVEIDNLLVFLVWVVVGTVTAVVLGLTLLISLVLVVLYRRKHSKRDYTGCSTSERLSPVKQAPRKCPSDTEGLVKSPPSAGSHQGPVIYAQLDHSGGHHSGKINKSESVVYADIRKD</sequence>
<keyword id="KW-1015">Disulfide bond</keyword>
<keyword id="KW-0325">Glycoprotein</keyword>
<keyword id="KW-0393">Immunoglobulin domain</keyword>
<keyword id="KW-0472">Membrane</keyword>
<keyword id="KW-0597">Phosphoprotein</keyword>
<keyword id="KW-1185">Reference proteome</keyword>
<keyword id="KW-0732">Signal</keyword>
<keyword id="KW-0812">Transmembrane</keyword>
<keyword id="KW-1133">Transmembrane helix</keyword>